<gene>
    <name evidence="1" type="primary">kynA</name>
    <name type="ordered locus">Noca_1224</name>
</gene>
<proteinExistence type="inferred from homology"/>
<sequence>MSDNFVSFGEQGAQLTYGSYLRLPQLLEAQHLESDPPAHDELLFITIHQVYELWFKQLLHEVSAARDAMLGGEAGGRLWWAQHLLTRVHVIERVLVQQIDVLETMTPQEFLEFRQRLAPASGFQSVQFRELEFLSGAKDPAYLERFRGITPAEKARLDARLSEPTLWDAFLAMLRSFGFAADSDAEVSAALRTAAHDRTRYAVVWALSEGLLQHDELAANWRARHVVMVERMIGSKSGTGGSSGSSYLRSRLPVQYYPLLWGLRSEL</sequence>
<protein>
    <recommendedName>
        <fullName evidence="1">Tryptophan 2,3-dioxygenase</fullName>
        <shortName evidence="1">TDO</shortName>
        <ecNumber evidence="1">1.13.11.11</ecNumber>
    </recommendedName>
    <alternativeName>
        <fullName evidence="1">Tryptamin 2,3-dioxygenase</fullName>
    </alternativeName>
    <alternativeName>
        <fullName evidence="1">Tryptophan oxygenase</fullName>
        <shortName evidence="1">TO</shortName>
        <shortName evidence="1">TRPO</shortName>
    </alternativeName>
    <alternativeName>
        <fullName evidence="1">Tryptophan pyrrolase</fullName>
    </alternativeName>
    <alternativeName>
        <fullName evidence="1">Tryptophanase</fullName>
    </alternativeName>
</protein>
<keyword id="KW-0223">Dioxygenase</keyword>
<keyword id="KW-0349">Heme</keyword>
<keyword id="KW-0408">Iron</keyword>
<keyword id="KW-0479">Metal-binding</keyword>
<keyword id="KW-0560">Oxidoreductase</keyword>
<keyword id="KW-1185">Reference proteome</keyword>
<keyword id="KW-0823">Tryptophan catabolism</keyword>
<feature type="chain" id="PRO_0000360120" description="Tryptophan 2,3-dioxygenase">
    <location>
        <begin position="1"/>
        <end position="267"/>
    </location>
</feature>
<feature type="binding site" evidence="1">
    <location>
        <begin position="44"/>
        <end position="48"/>
    </location>
    <ligand>
        <name>substrate</name>
    </ligand>
</feature>
<feature type="binding site" evidence="1">
    <location>
        <position position="114"/>
    </location>
    <ligand>
        <name>substrate</name>
    </ligand>
</feature>
<feature type="binding site" description="axial binding residue" evidence="1">
    <location>
        <position position="225"/>
    </location>
    <ligand>
        <name>heme</name>
        <dbReference type="ChEBI" id="CHEBI:30413"/>
    </ligand>
    <ligandPart>
        <name>Fe</name>
        <dbReference type="ChEBI" id="CHEBI:18248"/>
    </ligandPart>
</feature>
<feature type="binding site" evidence="1">
    <location>
        <position position="239"/>
    </location>
    <ligand>
        <name>substrate</name>
    </ligand>
</feature>
<accession>A1SG03</accession>
<dbReference type="EC" id="1.13.11.11" evidence="1"/>
<dbReference type="EMBL" id="CP000509">
    <property type="protein sequence ID" value="ABL80738.1"/>
    <property type="molecule type" value="Genomic_DNA"/>
</dbReference>
<dbReference type="RefSeq" id="WP_011754686.1">
    <property type="nucleotide sequence ID" value="NC_008699.1"/>
</dbReference>
<dbReference type="SMR" id="A1SG03"/>
<dbReference type="STRING" id="196162.Noca_1224"/>
<dbReference type="KEGG" id="nca:Noca_1224"/>
<dbReference type="eggNOG" id="COG3483">
    <property type="taxonomic scope" value="Bacteria"/>
</dbReference>
<dbReference type="HOGENOM" id="CLU_063240_0_0_11"/>
<dbReference type="OrthoDB" id="9776847at2"/>
<dbReference type="UniPathway" id="UPA00333">
    <property type="reaction ID" value="UER00453"/>
</dbReference>
<dbReference type="Proteomes" id="UP000000640">
    <property type="component" value="Chromosome"/>
</dbReference>
<dbReference type="GO" id="GO:0020037">
    <property type="term" value="F:heme binding"/>
    <property type="evidence" value="ECO:0000250"/>
    <property type="project" value="UniProtKB"/>
</dbReference>
<dbReference type="GO" id="GO:0046872">
    <property type="term" value="F:metal ion binding"/>
    <property type="evidence" value="ECO:0007669"/>
    <property type="project" value="UniProtKB-KW"/>
</dbReference>
<dbReference type="GO" id="GO:0004833">
    <property type="term" value="F:tryptophan 2,3-dioxygenase activity"/>
    <property type="evidence" value="ECO:0000250"/>
    <property type="project" value="UniProtKB"/>
</dbReference>
<dbReference type="GO" id="GO:0019442">
    <property type="term" value="P:L-tryptophan catabolic process to acetyl-CoA"/>
    <property type="evidence" value="ECO:0007669"/>
    <property type="project" value="TreeGrafter"/>
</dbReference>
<dbReference type="GO" id="GO:0019441">
    <property type="term" value="P:L-tryptophan catabolic process to kynurenine"/>
    <property type="evidence" value="ECO:0000250"/>
    <property type="project" value="UniProtKB"/>
</dbReference>
<dbReference type="FunFam" id="1.20.58.480:FF:000001">
    <property type="entry name" value="Tryptophan 2,3-dioxygenase"/>
    <property type="match status" value="1"/>
</dbReference>
<dbReference type="Gene3D" id="1.20.58.480">
    <property type="match status" value="1"/>
</dbReference>
<dbReference type="HAMAP" id="MF_01972">
    <property type="entry name" value="T23O"/>
    <property type="match status" value="1"/>
</dbReference>
<dbReference type="InterPro" id="IPR037217">
    <property type="entry name" value="Trp/Indoleamine_2_3_dOase-like"/>
</dbReference>
<dbReference type="InterPro" id="IPR004981">
    <property type="entry name" value="Trp_2_3_dOase"/>
</dbReference>
<dbReference type="PANTHER" id="PTHR10138">
    <property type="entry name" value="TRYPTOPHAN 2,3-DIOXYGENASE"/>
    <property type="match status" value="1"/>
</dbReference>
<dbReference type="PANTHER" id="PTHR10138:SF0">
    <property type="entry name" value="TRYPTOPHAN 2,3-DIOXYGENASE"/>
    <property type="match status" value="1"/>
</dbReference>
<dbReference type="Pfam" id="PF03301">
    <property type="entry name" value="Trp_dioxygenase"/>
    <property type="match status" value="2"/>
</dbReference>
<dbReference type="SUPFAM" id="SSF140959">
    <property type="entry name" value="Indolic compounds 2,3-dioxygenase-like"/>
    <property type="match status" value="1"/>
</dbReference>
<name>T23O_NOCSJ</name>
<comment type="function">
    <text evidence="1">Heme-dependent dioxygenase that catalyzes the oxidative cleavage of the L-tryptophan (L-Trp) pyrrole ring and converts L-tryptophan to N-formyl-L-kynurenine. Catalyzes the oxidative cleavage of the indole moiety.</text>
</comment>
<comment type="catalytic activity">
    <reaction evidence="1">
        <text>L-tryptophan + O2 = N-formyl-L-kynurenine</text>
        <dbReference type="Rhea" id="RHEA:24536"/>
        <dbReference type="ChEBI" id="CHEBI:15379"/>
        <dbReference type="ChEBI" id="CHEBI:57912"/>
        <dbReference type="ChEBI" id="CHEBI:58629"/>
        <dbReference type="EC" id="1.13.11.11"/>
    </reaction>
</comment>
<comment type="cofactor">
    <cofactor evidence="1">
        <name>heme</name>
        <dbReference type="ChEBI" id="CHEBI:30413"/>
    </cofactor>
    <text evidence="1">Binds 1 heme group per subunit.</text>
</comment>
<comment type="pathway">
    <text evidence="1">Amino-acid degradation; L-tryptophan degradation via kynurenine pathway; L-kynurenine from L-tryptophan: step 1/2.</text>
</comment>
<comment type="subunit">
    <text evidence="1">Homotetramer.</text>
</comment>
<comment type="similarity">
    <text evidence="1">Belongs to the tryptophan 2,3-dioxygenase family.</text>
</comment>
<evidence type="ECO:0000255" key="1">
    <source>
        <dbReference type="HAMAP-Rule" id="MF_01972"/>
    </source>
</evidence>
<organism>
    <name type="scientific">Nocardioides sp. (strain ATCC BAA-499 / JS614)</name>
    <dbReference type="NCBI Taxonomy" id="196162"/>
    <lineage>
        <taxon>Bacteria</taxon>
        <taxon>Bacillati</taxon>
        <taxon>Actinomycetota</taxon>
        <taxon>Actinomycetes</taxon>
        <taxon>Propionibacteriales</taxon>
        <taxon>Nocardioidaceae</taxon>
        <taxon>Nocardioides</taxon>
    </lineage>
</organism>
<reference key="1">
    <citation type="submission" date="2006-12" db="EMBL/GenBank/DDBJ databases">
        <title>Complete sequence of chromosome 1 of Nocardioides sp. JS614.</title>
        <authorList>
            <person name="Copeland A."/>
            <person name="Lucas S."/>
            <person name="Lapidus A."/>
            <person name="Barry K."/>
            <person name="Detter J.C."/>
            <person name="Glavina del Rio T."/>
            <person name="Hammon N."/>
            <person name="Israni S."/>
            <person name="Dalin E."/>
            <person name="Tice H."/>
            <person name="Pitluck S."/>
            <person name="Thompson L.S."/>
            <person name="Brettin T."/>
            <person name="Bruce D."/>
            <person name="Han C."/>
            <person name="Tapia R."/>
            <person name="Schmutz J."/>
            <person name="Larimer F."/>
            <person name="Land M."/>
            <person name="Hauser L."/>
            <person name="Kyrpides N."/>
            <person name="Kim E."/>
            <person name="Mattes T."/>
            <person name="Gossett J."/>
            <person name="Richardson P."/>
        </authorList>
    </citation>
    <scope>NUCLEOTIDE SEQUENCE [LARGE SCALE GENOMIC DNA]</scope>
    <source>
        <strain>ATCC BAA-499 / JS614</strain>
    </source>
</reference>